<evidence type="ECO:0000255" key="1">
    <source>
        <dbReference type="HAMAP-Rule" id="MF_00680"/>
    </source>
</evidence>
<accession>Q8ZP48</accession>
<protein>
    <recommendedName>
        <fullName evidence="1">Putative double-stranded DNA mimic protein YciU</fullName>
    </recommendedName>
</protein>
<reference key="1">
    <citation type="journal article" date="2001" name="Nature">
        <title>Complete genome sequence of Salmonella enterica serovar Typhimurium LT2.</title>
        <authorList>
            <person name="McClelland M."/>
            <person name="Sanderson K.E."/>
            <person name="Spieth J."/>
            <person name="Clifton S.W."/>
            <person name="Latreille P."/>
            <person name="Courtney L."/>
            <person name="Porwollik S."/>
            <person name="Ali J."/>
            <person name="Dante M."/>
            <person name="Du F."/>
            <person name="Hou S."/>
            <person name="Layman D."/>
            <person name="Leonard S."/>
            <person name="Nguyen C."/>
            <person name="Scott K."/>
            <person name="Holmes A."/>
            <person name="Grewal N."/>
            <person name="Mulvaney E."/>
            <person name="Ryan E."/>
            <person name="Sun H."/>
            <person name="Florea L."/>
            <person name="Miller W."/>
            <person name="Stoneking T."/>
            <person name="Nhan M."/>
            <person name="Waterston R."/>
            <person name="Wilson R.K."/>
        </authorList>
    </citation>
    <scope>NUCLEOTIDE SEQUENCE [LARGE SCALE GENOMIC DNA]</scope>
    <source>
        <strain>LT2 / SGSC1412 / ATCC 700720</strain>
    </source>
</reference>
<comment type="function">
    <text evidence="1">May act as a double-stranded DNA (dsDNA) mimic. Probably regulates the activity of a dsDNA-binding protein.</text>
</comment>
<comment type="similarity">
    <text evidence="1">Belongs to the putative dsDNA mimic protein family.</text>
</comment>
<sequence length="109" mass="12743">MEMDLNNRLTEDETLEQAYDIFLELAADNLDPADIILFNLQFEERGGAELFDPAEDWQEHIDFDLNPDFFAEVVIGLADTEDGEINDIFARVLLCREKDHKLCHILWRE</sequence>
<proteinExistence type="inferred from homology"/>
<gene>
    <name evidence="1" type="primary">yciU</name>
    <name type="ordered locus">STM1740</name>
</gene>
<dbReference type="EMBL" id="AE006468">
    <property type="protein sequence ID" value="AAL20658.1"/>
    <property type="molecule type" value="Genomic_DNA"/>
</dbReference>
<dbReference type="RefSeq" id="NP_448158.1">
    <property type="nucleotide sequence ID" value="NC_003197.2"/>
</dbReference>
<dbReference type="RefSeq" id="WP_000425069.1">
    <property type="nucleotide sequence ID" value="NC_003197.2"/>
</dbReference>
<dbReference type="SMR" id="Q8ZP48"/>
<dbReference type="STRING" id="99287.STM1740"/>
<dbReference type="PaxDb" id="99287-STM1740"/>
<dbReference type="GeneID" id="2673771"/>
<dbReference type="KEGG" id="stm:STM1740"/>
<dbReference type="HOGENOM" id="CLU_143392_0_0_6"/>
<dbReference type="PhylomeDB" id="Q8ZP48"/>
<dbReference type="BioCyc" id="SENT99287:STM1740-MONOMER"/>
<dbReference type="Proteomes" id="UP000001014">
    <property type="component" value="Chromosome"/>
</dbReference>
<dbReference type="Gene3D" id="3.10.450.140">
    <property type="entry name" value="dsDNA mimic, putative"/>
    <property type="match status" value="1"/>
</dbReference>
<dbReference type="HAMAP" id="MF_00680">
    <property type="entry name" value="Put_dsDNA_mimic"/>
    <property type="match status" value="1"/>
</dbReference>
<dbReference type="InterPro" id="IPR007376">
    <property type="entry name" value="dsDNA_mimic_put"/>
</dbReference>
<dbReference type="InterPro" id="IPR036763">
    <property type="entry name" value="Put_dsDNA_mimic_sf"/>
</dbReference>
<dbReference type="NCBIfam" id="NF003469">
    <property type="entry name" value="PRK05094.1"/>
    <property type="match status" value="1"/>
</dbReference>
<dbReference type="Pfam" id="PF04269">
    <property type="entry name" value="DUF440"/>
    <property type="match status" value="1"/>
</dbReference>
<dbReference type="PIRSF" id="PIRSF004916">
    <property type="entry name" value="UCP004916"/>
    <property type="match status" value="1"/>
</dbReference>
<dbReference type="SUPFAM" id="SSF102816">
    <property type="entry name" value="Putative dsDNA mimic"/>
    <property type="match status" value="1"/>
</dbReference>
<organism>
    <name type="scientific">Salmonella typhimurium (strain LT2 / SGSC1412 / ATCC 700720)</name>
    <dbReference type="NCBI Taxonomy" id="99287"/>
    <lineage>
        <taxon>Bacteria</taxon>
        <taxon>Pseudomonadati</taxon>
        <taxon>Pseudomonadota</taxon>
        <taxon>Gammaproteobacteria</taxon>
        <taxon>Enterobacterales</taxon>
        <taxon>Enterobacteriaceae</taxon>
        <taxon>Salmonella</taxon>
    </lineage>
</organism>
<name>YCIU_SALTY</name>
<feature type="chain" id="PRO_0000072783" description="Putative double-stranded DNA mimic protein YciU">
    <location>
        <begin position="1"/>
        <end position="109"/>
    </location>
</feature>
<keyword id="KW-1185">Reference proteome</keyword>